<dbReference type="EMBL" id="AM747720">
    <property type="protein sequence ID" value="CAR52496.1"/>
    <property type="molecule type" value="Genomic_DNA"/>
</dbReference>
<dbReference type="RefSeq" id="WP_006491598.1">
    <property type="nucleotide sequence ID" value="NC_011000.1"/>
</dbReference>
<dbReference type="SMR" id="B4EDS4"/>
<dbReference type="GeneID" id="62011589"/>
<dbReference type="KEGG" id="bcj:BCAL2195"/>
<dbReference type="eggNOG" id="COG1076">
    <property type="taxonomic scope" value="Bacteria"/>
</dbReference>
<dbReference type="HOGENOM" id="CLU_068529_2_1_4"/>
<dbReference type="BioCyc" id="BCEN216591:G1G1V-2410-MONOMER"/>
<dbReference type="Proteomes" id="UP000001035">
    <property type="component" value="Chromosome 1"/>
</dbReference>
<dbReference type="GO" id="GO:1990230">
    <property type="term" value="C:iron-sulfur cluster transfer complex"/>
    <property type="evidence" value="ECO:0007669"/>
    <property type="project" value="TreeGrafter"/>
</dbReference>
<dbReference type="GO" id="GO:0001671">
    <property type="term" value="F:ATPase activator activity"/>
    <property type="evidence" value="ECO:0007669"/>
    <property type="project" value="InterPro"/>
</dbReference>
<dbReference type="GO" id="GO:0051087">
    <property type="term" value="F:protein-folding chaperone binding"/>
    <property type="evidence" value="ECO:0007669"/>
    <property type="project" value="InterPro"/>
</dbReference>
<dbReference type="GO" id="GO:0044571">
    <property type="term" value="P:[2Fe-2S] cluster assembly"/>
    <property type="evidence" value="ECO:0007669"/>
    <property type="project" value="InterPro"/>
</dbReference>
<dbReference type="GO" id="GO:0051259">
    <property type="term" value="P:protein complex oligomerization"/>
    <property type="evidence" value="ECO:0007669"/>
    <property type="project" value="InterPro"/>
</dbReference>
<dbReference type="GO" id="GO:0006457">
    <property type="term" value="P:protein folding"/>
    <property type="evidence" value="ECO:0007669"/>
    <property type="project" value="UniProtKB-UniRule"/>
</dbReference>
<dbReference type="CDD" id="cd06257">
    <property type="entry name" value="DnaJ"/>
    <property type="match status" value="1"/>
</dbReference>
<dbReference type="Gene3D" id="1.10.287.110">
    <property type="entry name" value="DnaJ domain"/>
    <property type="match status" value="1"/>
</dbReference>
<dbReference type="Gene3D" id="1.20.1280.20">
    <property type="entry name" value="HscB, C-terminal domain"/>
    <property type="match status" value="1"/>
</dbReference>
<dbReference type="HAMAP" id="MF_00682">
    <property type="entry name" value="HscB"/>
    <property type="match status" value="1"/>
</dbReference>
<dbReference type="InterPro" id="IPR001623">
    <property type="entry name" value="DnaJ_domain"/>
</dbReference>
<dbReference type="InterPro" id="IPR004640">
    <property type="entry name" value="HscB"/>
</dbReference>
<dbReference type="InterPro" id="IPR036386">
    <property type="entry name" value="HscB_C_sf"/>
</dbReference>
<dbReference type="InterPro" id="IPR009073">
    <property type="entry name" value="HscB_oligo_C"/>
</dbReference>
<dbReference type="InterPro" id="IPR036869">
    <property type="entry name" value="J_dom_sf"/>
</dbReference>
<dbReference type="NCBIfam" id="TIGR00714">
    <property type="entry name" value="hscB"/>
    <property type="match status" value="1"/>
</dbReference>
<dbReference type="NCBIfam" id="NF002935">
    <property type="entry name" value="PRK03578.1"/>
    <property type="match status" value="1"/>
</dbReference>
<dbReference type="PANTHER" id="PTHR14021">
    <property type="entry name" value="IRON-SULFUR CLUSTER CO-CHAPERONE PROTEIN HSCB"/>
    <property type="match status" value="1"/>
</dbReference>
<dbReference type="PANTHER" id="PTHR14021:SF15">
    <property type="entry name" value="IRON-SULFUR CLUSTER CO-CHAPERONE PROTEIN HSCB"/>
    <property type="match status" value="1"/>
</dbReference>
<dbReference type="Pfam" id="PF07743">
    <property type="entry name" value="HSCB_C"/>
    <property type="match status" value="1"/>
</dbReference>
<dbReference type="SMART" id="SM00271">
    <property type="entry name" value="DnaJ"/>
    <property type="match status" value="1"/>
</dbReference>
<dbReference type="SUPFAM" id="SSF46565">
    <property type="entry name" value="Chaperone J-domain"/>
    <property type="match status" value="1"/>
</dbReference>
<dbReference type="SUPFAM" id="SSF47144">
    <property type="entry name" value="HSC20 (HSCB), C-terminal oligomerisation domain"/>
    <property type="match status" value="1"/>
</dbReference>
<dbReference type="PROSITE" id="PS50076">
    <property type="entry name" value="DNAJ_2"/>
    <property type="match status" value="1"/>
</dbReference>
<protein>
    <recommendedName>
        <fullName evidence="1">Co-chaperone protein HscB homolog</fullName>
    </recommendedName>
</protein>
<proteinExistence type="inferred from homology"/>
<name>HSCB_BURCJ</name>
<reference key="1">
    <citation type="journal article" date="2009" name="J. Bacteriol.">
        <title>The genome of Burkholderia cenocepacia J2315, an epidemic pathogen of cystic fibrosis patients.</title>
        <authorList>
            <person name="Holden M.T."/>
            <person name="Seth-Smith H.M."/>
            <person name="Crossman L.C."/>
            <person name="Sebaihia M."/>
            <person name="Bentley S.D."/>
            <person name="Cerdeno-Tarraga A.M."/>
            <person name="Thomson N.R."/>
            <person name="Bason N."/>
            <person name="Quail M.A."/>
            <person name="Sharp S."/>
            <person name="Cherevach I."/>
            <person name="Churcher C."/>
            <person name="Goodhead I."/>
            <person name="Hauser H."/>
            <person name="Holroyd N."/>
            <person name="Mungall K."/>
            <person name="Scott P."/>
            <person name="Walker D."/>
            <person name="White B."/>
            <person name="Rose H."/>
            <person name="Iversen P."/>
            <person name="Mil-Homens D."/>
            <person name="Rocha E.P."/>
            <person name="Fialho A.M."/>
            <person name="Baldwin A."/>
            <person name="Dowson C."/>
            <person name="Barrell B.G."/>
            <person name="Govan J.R."/>
            <person name="Vandamme P."/>
            <person name="Hart C.A."/>
            <person name="Mahenthiralingam E."/>
            <person name="Parkhill J."/>
        </authorList>
    </citation>
    <scope>NUCLEOTIDE SEQUENCE [LARGE SCALE GENOMIC DNA]</scope>
    <source>
        <strain>ATCC BAA-245 / DSM 16553 / LMG 16656 / NCTC 13227 / J2315 / CF5610</strain>
    </source>
</reference>
<feature type="chain" id="PRO_1000131727" description="Co-chaperone protein HscB homolog">
    <location>
        <begin position="1"/>
        <end position="175"/>
    </location>
</feature>
<feature type="domain" description="J" evidence="1">
    <location>
        <begin position="7"/>
        <end position="79"/>
    </location>
</feature>
<organism>
    <name type="scientific">Burkholderia cenocepacia (strain ATCC BAA-245 / DSM 16553 / LMG 16656 / NCTC 13227 / J2315 / CF5610)</name>
    <name type="common">Burkholderia cepacia (strain J2315)</name>
    <dbReference type="NCBI Taxonomy" id="216591"/>
    <lineage>
        <taxon>Bacteria</taxon>
        <taxon>Pseudomonadati</taxon>
        <taxon>Pseudomonadota</taxon>
        <taxon>Betaproteobacteria</taxon>
        <taxon>Burkholderiales</taxon>
        <taxon>Burkholderiaceae</taxon>
        <taxon>Burkholderia</taxon>
        <taxon>Burkholderia cepacia complex</taxon>
    </lineage>
</organism>
<sequence>MVSLKDSHFDLFHLPAQFALDETALDAAYRTVQTQVHPDRFAAAGDAQKRIAMQWATRANEAYRTLRDPLKRASYLLSLRGVDIGAENNTAMEPAFLMQQMEWREGIEDAAAARNVDALDALLAELRDEKRVRVERLGTLLDSGADQAAAEAVRQLMFIERVASEVGAQIERLET</sequence>
<keyword id="KW-0143">Chaperone</keyword>
<accession>B4EDS4</accession>
<gene>
    <name evidence="1" type="primary">hscB</name>
    <name type="ordered locus">BceJ2315_21580</name>
    <name type="ORF">BCAL2195</name>
</gene>
<comment type="function">
    <text evidence="1">Co-chaperone involved in the maturation of iron-sulfur cluster-containing proteins. Seems to help targeting proteins to be folded toward HscA.</text>
</comment>
<comment type="subunit">
    <text evidence="1">Interacts with HscA and stimulates its ATPase activity.</text>
</comment>
<comment type="similarity">
    <text evidence="1">Belongs to the HscB family.</text>
</comment>
<evidence type="ECO:0000255" key="1">
    <source>
        <dbReference type="HAMAP-Rule" id="MF_00682"/>
    </source>
</evidence>